<dbReference type="EC" id="3.2.1.35"/>
<dbReference type="EMBL" id="X89999">
    <property type="protein sequence ID" value="CAA62016.1"/>
    <property type="molecule type" value="mRNA"/>
</dbReference>
<dbReference type="EMBL" id="BC081748">
    <property type="protein sequence ID" value="AAH81748.1"/>
    <property type="molecule type" value="mRNA"/>
</dbReference>
<dbReference type="RefSeq" id="NP_446419.1">
    <property type="nucleotide sequence ID" value="NM_053967.2"/>
</dbReference>
<dbReference type="SMR" id="Q62803"/>
<dbReference type="FunCoup" id="Q62803">
    <property type="interactions" value="107"/>
</dbReference>
<dbReference type="STRING" id="10116.ENSRNOP00000009537"/>
<dbReference type="CAZy" id="GH56">
    <property type="family name" value="Glycoside Hydrolase Family 56"/>
</dbReference>
<dbReference type="GlyCosmos" id="Q62803">
    <property type="glycosylation" value="5 sites, No reported glycans"/>
</dbReference>
<dbReference type="GlyGen" id="Q62803">
    <property type="glycosylation" value="5 sites"/>
</dbReference>
<dbReference type="PhosphoSitePlus" id="Q62803"/>
<dbReference type="PaxDb" id="10116-ENSRNOP00000009537"/>
<dbReference type="Ensembl" id="ENSRNOT00000009537.7">
    <property type="protein sequence ID" value="ENSRNOP00000009537.3"/>
    <property type="gene ID" value="ENSRNOG00000007231.7"/>
</dbReference>
<dbReference type="GeneID" id="117037"/>
<dbReference type="KEGG" id="rno:117037"/>
<dbReference type="UCSC" id="RGD:620547">
    <property type="organism name" value="rat"/>
</dbReference>
<dbReference type="AGR" id="RGD:620547"/>
<dbReference type="CTD" id="6677"/>
<dbReference type="RGD" id="620547">
    <property type="gene designation" value="Spam1"/>
</dbReference>
<dbReference type="eggNOG" id="ENOG502QTUU">
    <property type="taxonomic scope" value="Eukaryota"/>
</dbReference>
<dbReference type="GeneTree" id="ENSGT01020000230364"/>
<dbReference type="HOGENOM" id="CLU_036366_0_1_1"/>
<dbReference type="InParanoid" id="Q62803"/>
<dbReference type="OMA" id="SLAAKMC"/>
<dbReference type="OrthoDB" id="5796153at2759"/>
<dbReference type="PhylomeDB" id="Q62803"/>
<dbReference type="TreeFam" id="TF321598"/>
<dbReference type="PRO" id="PR:Q62803"/>
<dbReference type="Proteomes" id="UP000002494">
    <property type="component" value="Chromosome 4"/>
</dbReference>
<dbReference type="Bgee" id="ENSRNOG00000007231">
    <property type="expression patterns" value="Expressed in testis"/>
</dbReference>
<dbReference type="GO" id="GO:0001669">
    <property type="term" value="C:acrosomal vesicle"/>
    <property type="evidence" value="ECO:0000266"/>
    <property type="project" value="RGD"/>
</dbReference>
<dbReference type="GO" id="GO:0009897">
    <property type="term" value="C:external side of plasma membrane"/>
    <property type="evidence" value="ECO:0000266"/>
    <property type="project" value="RGD"/>
</dbReference>
<dbReference type="GO" id="GO:0045121">
    <property type="term" value="C:membrane raft"/>
    <property type="evidence" value="ECO:0000266"/>
    <property type="project" value="RGD"/>
</dbReference>
<dbReference type="GO" id="GO:0005886">
    <property type="term" value="C:plasma membrane"/>
    <property type="evidence" value="ECO:0000266"/>
    <property type="project" value="RGD"/>
</dbReference>
<dbReference type="GO" id="GO:0004415">
    <property type="term" value="F:hyalurononglucosaminidase activity"/>
    <property type="evidence" value="ECO:0000266"/>
    <property type="project" value="RGD"/>
</dbReference>
<dbReference type="GO" id="GO:0005975">
    <property type="term" value="P:carbohydrate metabolic process"/>
    <property type="evidence" value="ECO:0007669"/>
    <property type="project" value="InterPro"/>
</dbReference>
<dbReference type="GO" id="GO:0007155">
    <property type="term" value="P:cell adhesion"/>
    <property type="evidence" value="ECO:0000304"/>
    <property type="project" value="RGD"/>
</dbReference>
<dbReference type="GO" id="GO:0007342">
    <property type="term" value="P:fusion of sperm to egg plasma membrane involved in single fertilization"/>
    <property type="evidence" value="ECO:0000304"/>
    <property type="project" value="RGD"/>
</dbReference>
<dbReference type="GO" id="GO:0030214">
    <property type="term" value="P:hyaluronan catabolic process"/>
    <property type="evidence" value="ECO:0000318"/>
    <property type="project" value="GO_Central"/>
</dbReference>
<dbReference type="GO" id="GO:0007338">
    <property type="term" value="P:single fertilization"/>
    <property type="evidence" value="ECO:0000266"/>
    <property type="project" value="RGD"/>
</dbReference>
<dbReference type="FunFam" id="3.20.20.70:FF:000065">
    <property type="entry name" value="Hyaluronidase"/>
    <property type="match status" value="1"/>
</dbReference>
<dbReference type="Gene3D" id="3.20.20.70">
    <property type="entry name" value="Aldolase class I"/>
    <property type="match status" value="1"/>
</dbReference>
<dbReference type="InterPro" id="IPR013785">
    <property type="entry name" value="Aldolase_TIM"/>
</dbReference>
<dbReference type="InterPro" id="IPR017853">
    <property type="entry name" value="Glycoside_hydrolase_SF"/>
</dbReference>
<dbReference type="InterPro" id="IPR018155">
    <property type="entry name" value="Hyaluronidase"/>
</dbReference>
<dbReference type="InterPro" id="IPR001439">
    <property type="entry name" value="Hyaluronidase_PH20/Hyal5"/>
</dbReference>
<dbReference type="PANTHER" id="PTHR11769">
    <property type="entry name" value="HYALURONIDASE"/>
    <property type="match status" value="1"/>
</dbReference>
<dbReference type="PANTHER" id="PTHR11769:SF17">
    <property type="entry name" value="HYALURONIDASE PH-20"/>
    <property type="match status" value="1"/>
</dbReference>
<dbReference type="Pfam" id="PF01630">
    <property type="entry name" value="Glyco_hydro_56"/>
    <property type="match status" value="1"/>
</dbReference>
<dbReference type="PIRSF" id="PIRSF038193">
    <property type="entry name" value="Hyaluronidase"/>
    <property type="match status" value="1"/>
</dbReference>
<dbReference type="PIRSF" id="PIRSF500773">
    <property type="entry name" value="Hyaluronidase_PH20_Hyal5"/>
    <property type="match status" value="1"/>
</dbReference>
<dbReference type="PRINTS" id="PR00846">
    <property type="entry name" value="GLHYDRLASE56"/>
</dbReference>
<dbReference type="PRINTS" id="PR00848">
    <property type="entry name" value="SPERMPH20"/>
</dbReference>
<dbReference type="SUPFAM" id="SSF51445">
    <property type="entry name" value="(Trans)glycosidases"/>
    <property type="match status" value="1"/>
</dbReference>
<evidence type="ECO:0000250" key="1"/>
<evidence type="ECO:0000255" key="2"/>
<evidence type="ECO:0000305" key="3"/>
<reference key="1">
    <citation type="journal article" date="1996" name="Mol. Reprod. Dev.">
        <title>Molecular cloning and characterization of rat sperm surface antigen 2B1, a glycoprotein implicated in sperm-zona binding.</title>
        <authorList>
            <person name="Hou S.T."/>
            <person name="Ma A."/>
            <person name="Jones R."/>
            <person name="Hall L."/>
        </authorList>
    </citation>
    <scope>NUCLEOTIDE SEQUENCE [MRNA]</scope>
    <source>
        <strain>Wistar</strain>
        <tissue>Testis</tissue>
    </source>
</reference>
<reference key="2">
    <citation type="journal article" date="2004" name="Genome Res.">
        <title>The status, quality, and expansion of the NIH full-length cDNA project: the Mammalian Gene Collection (MGC).</title>
        <authorList>
            <consortium name="The MGC Project Team"/>
        </authorList>
    </citation>
    <scope>NUCLEOTIDE SEQUENCE [LARGE SCALE MRNA]</scope>
    <source>
        <tissue>Testis</tissue>
    </source>
</reference>
<proteinExistence type="evidence at transcript level"/>
<organism>
    <name type="scientific">Rattus norvegicus</name>
    <name type="common">Rat</name>
    <dbReference type="NCBI Taxonomy" id="10116"/>
    <lineage>
        <taxon>Eukaryota</taxon>
        <taxon>Metazoa</taxon>
        <taxon>Chordata</taxon>
        <taxon>Craniata</taxon>
        <taxon>Vertebrata</taxon>
        <taxon>Euteleostomi</taxon>
        <taxon>Mammalia</taxon>
        <taxon>Eutheria</taxon>
        <taxon>Euarchontoglires</taxon>
        <taxon>Glires</taxon>
        <taxon>Rodentia</taxon>
        <taxon>Myomorpha</taxon>
        <taxon>Muroidea</taxon>
        <taxon>Muridae</taxon>
        <taxon>Murinae</taxon>
        <taxon>Rattus</taxon>
    </lineage>
</organism>
<name>HYALP_RAT</name>
<comment type="function">
    <text evidence="1">Involved in sperm-egg adhesion. Upon fertilization sperm must first penetrate a layer of cumulus cells that surrounds the egg before reaching the zona pellucida. The cumulus cells are embedded in a matrix containing hyaluronic acid which is formed prior to ovulation. This protein aids in penetrating the layer of cumulus cells by digesting hyaluronic acid (By similarity).</text>
</comment>
<comment type="catalytic activity">
    <reaction>
        <text>Random hydrolysis of (1-&gt;4)-linkages between N-acetyl-beta-D-glucosamine and D-glucuronate residues in hyaluronate.</text>
        <dbReference type="EC" id="3.2.1.35"/>
    </reaction>
</comment>
<comment type="subcellular location">
    <subcellularLocation>
        <location>Cell membrane</location>
        <topology>Lipid-anchor</topology>
        <topology>GPI-anchor</topology>
    </subcellularLocation>
</comment>
<comment type="similarity">
    <text evidence="3">Belongs to the glycosyl hydrolase 56 family.</text>
</comment>
<sequence length="512" mass="58412">MGELQFKWLFWRSFAESGGTFQTVLIFLFIPYSLTVDYRATPVLSDTTFVWVWNVPTEACVENVTEPIDLSFFSLIGSPRKTAIGQPVTLFYVDRLGNYPHIDAQQTEHHGGIPQKGDLTTHLVKAKEDVERYIPTDKLGLAIIDWEEWRPTWMRNWTPKDIYRNKSIELVQAADPAINITEATVRAKAQFEGAAKEFMEGTLKLGKHIRPKHLWGFYLFPDCYNNKFQVDNYDGQCPDVEKKRNDDLDWLWKESTGLYPSVYLKKDLKSSRKATLYVRYRVLESIRVSKVSDESNPVPIFVYIRLVFTDHVSEYLLEDDLVNTIGEIVAQGTSGIIIWDAMSLAQRSAGCPILRQYMKTTLNPYIVNVTLAAKMCSQTLCKEKGMCSRKTESSDAYLHLDPSSFSINVTEAGKYEVLGKPEVKDLEYFSEHFKCSCFSKMTCEETSDMRSIQDVNVCMGDNVCIKATLGPNSAFHLLPGKGLLLMTTLAHILHHLPHDIFVFPWKMLVSTP</sequence>
<keyword id="KW-0130">Cell adhesion</keyword>
<keyword id="KW-1003">Cell membrane</keyword>
<keyword id="KW-1015">Disulfide bond</keyword>
<keyword id="KW-0325">Glycoprotein</keyword>
<keyword id="KW-0326">Glycosidase</keyword>
<keyword id="KW-0336">GPI-anchor</keyword>
<keyword id="KW-0378">Hydrolase</keyword>
<keyword id="KW-0449">Lipoprotein</keyword>
<keyword id="KW-0472">Membrane</keyword>
<keyword id="KW-1185">Reference proteome</keyword>
<keyword id="KW-0732">Signal</keyword>
<feature type="signal peptide" evidence="1">
    <location>
        <begin position="1"/>
        <end position="35"/>
    </location>
</feature>
<feature type="chain" id="PRO_0000012097" description="Hyaluronidase PH-20">
    <location>
        <begin position="36"/>
        <end status="unknown"/>
    </location>
</feature>
<feature type="propeptide" id="PRO_0000012098" description="Removed in mature form" evidence="2">
    <location>
        <begin status="unknown"/>
        <end position="512"/>
    </location>
</feature>
<feature type="active site" description="Proton donor" evidence="1">
    <location>
        <position position="147"/>
    </location>
</feature>
<feature type="glycosylation site" description="N-linked (GlcNAc...) asparagine" evidence="2">
    <location>
        <position position="63"/>
    </location>
</feature>
<feature type="glycosylation site" description="N-linked (GlcNAc...) asparagine" evidence="2">
    <location>
        <position position="165"/>
    </location>
</feature>
<feature type="glycosylation site" description="N-linked (GlcNAc...) asparagine" evidence="2">
    <location>
        <position position="179"/>
    </location>
</feature>
<feature type="glycosylation site" description="N-linked (GlcNAc...) asparagine" evidence="2">
    <location>
        <position position="368"/>
    </location>
</feature>
<feature type="glycosylation site" description="N-linked (GlcNAc...) asparagine" evidence="2">
    <location>
        <position position="408"/>
    </location>
</feature>
<feature type="disulfide bond" evidence="1">
    <location>
        <begin position="60"/>
        <end position="351"/>
    </location>
</feature>
<feature type="disulfide bond" evidence="1">
    <location>
        <begin position="223"/>
        <end position="237"/>
    </location>
</feature>
<feature type="disulfide bond" evidence="1">
    <location>
        <begin position="376"/>
        <end position="387"/>
    </location>
</feature>
<feature type="disulfide bond" evidence="1">
    <location>
        <begin position="381"/>
        <end position="435"/>
    </location>
</feature>
<feature type="disulfide bond" evidence="1">
    <location>
        <begin position="437"/>
        <end position="464"/>
    </location>
</feature>
<gene>
    <name type="primary">Spam1</name>
    <name type="synonym">Ph20</name>
    <name type="synonym">Spam</name>
</gene>
<accession>Q62803</accession>
<protein>
    <recommendedName>
        <fullName>Hyaluronidase PH-20</fullName>
        <shortName>Hyal-PH20</shortName>
        <ecNumber>3.2.1.35</ecNumber>
    </recommendedName>
    <alternativeName>
        <fullName>Hyaluronoglucosaminidase PH-20</fullName>
    </alternativeName>
    <alternativeName>
        <fullName>Sperm adhesion molecule 1</fullName>
    </alternativeName>
    <alternativeName>
        <fullName>Sperm surface antigen 2B1</fullName>
    </alternativeName>
    <alternativeName>
        <fullName>Sperm surface protein PH-20</fullName>
    </alternativeName>
</protein>